<comment type="catalytic activity">
    <reaction evidence="1">
        <text>L-citrulline + L-aspartate + ATP = 2-(N(omega)-L-arginino)succinate + AMP + diphosphate + H(+)</text>
        <dbReference type="Rhea" id="RHEA:10932"/>
        <dbReference type="ChEBI" id="CHEBI:15378"/>
        <dbReference type="ChEBI" id="CHEBI:29991"/>
        <dbReference type="ChEBI" id="CHEBI:30616"/>
        <dbReference type="ChEBI" id="CHEBI:33019"/>
        <dbReference type="ChEBI" id="CHEBI:57472"/>
        <dbReference type="ChEBI" id="CHEBI:57743"/>
        <dbReference type="ChEBI" id="CHEBI:456215"/>
        <dbReference type="EC" id="6.3.4.5"/>
    </reaction>
</comment>
<comment type="pathway">
    <text evidence="1">Amino-acid biosynthesis; L-arginine biosynthesis; L-arginine from L-ornithine and carbamoyl phosphate: step 2/3.</text>
</comment>
<comment type="subunit">
    <text evidence="1">Homotetramer.</text>
</comment>
<comment type="subcellular location">
    <subcellularLocation>
        <location evidence="1">Cytoplasm</location>
    </subcellularLocation>
</comment>
<comment type="similarity">
    <text evidence="1">Belongs to the argininosuccinate synthase family. Type 2 subfamily.</text>
</comment>
<accession>A9IQ90</accession>
<evidence type="ECO:0000255" key="1">
    <source>
        <dbReference type="HAMAP-Rule" id="MF_00581"/>
    </source>
</evidence>
<name>ASSY_BORPD</name>
<organism>
    <name type="scientific">Bordetella petrii (strain ATCC BAA-461 / DSM 12804 / CCUG 43448)</name>
    <dbReference type="NCBI Taxonomy" id="340100"/>
    <lineage>
        <taxon>Bacteria</taxon>
        <taxon>Pseudomonadati</taxon>
        <taxon>Pseudomonadota</taxon>
        <taxon>Betaproteobacteria</taxon>
        <taxon>Burkholderiales</taxon>
        <taxon>Alcaligenaceae</taxon>
        <taxon>Bordetella</taxon>
    </lineage>
</organism>
<dbReference type="EC" id="6.3.4.5" evidence="1"/>
<dbReference type="EMBL" id="AM902716">
    <property type="protein sequence ID" value="CAP43031.1"/>
    <property type="molecule type" value="Genomic_DNA"/>
</dbReference>
<dbReference type="SMR" id="A9IQ90"/>
<dbReference type="STRING" id="94624.Bpet2689"/>
<dbReference type="KEGG" id="bpt:Bpet2689"/>
<dbReference type="eggNOG" id="COG0137">
    <property type="taxonomic scope" value="Bacteria"/>
</dbReference>
<dbReference type="UniPathway" id="UPA00068">
    <property type="reaction ID" value="UER00113"/>
</dbReference>
<dbReference type="Proteomes" id="UP000001225">
    <property type="component" value="Chromosome"/>
</dbReference>
<dbReference type="GO" id="GO:0005737">
    <property type="term" value="C:cytoplasm"/>
    <property type="evidence" value="ECO:0007669"/>
    <property type="project" value="UniProtKB-SubCell"/>
</dbReference>
<dbReference type="GO" id="GO:0004055">
    <property type="term" value="F:argininosuccinate synthase activity"/>
    <property type="evidence" value="ECO:0007669"/>
    <property type="project" value="UniProtKB-UniRule"/>
</dbReference>
<dbReference type="GO" id="GO:0005524">
    <property type="term" value="F:ATP binding"/>
    <property type="evidence" value="ECO:0007669"/>
    <property type="project" value="UniProtKB-UniRule"/>
</dbReference>
<dbReference type="GO" id="GO:0042803">
    <property type="term" value="F:protein homodimerization activity"/>
    <property type="evidence" value="ECO:0007669"/>
    <property type="project" value="InterPro"/>
</dbReference>
<dbReference type="GO" id="GO:0000053">
    <property type="term" value="P:argininosuccinate metabolic process"/>
    <property type="evidence" value="ECO:0007669"/>
    <property type="project" value="TreeGrafter"/>
</dbReference>
<dbReference type="GO" id="GO:0006526">
    <property type="term" value="P:L-arginine biosynthetic process"/>
    <property type="evidence" value="ECO:0007669"/>
    <property type="project" value="UniProtKB-UniRule"/>
</dbReference>
<dbReference type="GO" id="GO:0000050">
    <property type="term" value="P:urea cycle"/>
    <property type="evidence" value="ECO:0007669"/>
    <property type="project" value="TreeGrafter"/>
</dbReference>
<dbReference type="CDD" id="cd01999">
    <property type="entry name" value="ASS"/>
    <property type="match status" value="1"/>
</dbReference>
<dbReference type="FunFam" id="1.10.287.400:FF:000001">
    <property type="entry name" value="Argininosuccinate synthase"/>
    <property type="match status" value="1"/>
</dbReference>
<dbReference type="Gene3D" id="1.10.287.400">
    <property type="match status" value="1"/>
</dbReference>
<dbReference type="Gene3D" id="3.90.1260.10">
    <property type="entry name" value="Argininosuccinate synthetase, chain A, domain 2"/>
    <property type="match status" value="1"/>
</dbReference>
<dbReference type="Gene3D" id="3.40.50.620">
    <property type="entry name" value="HUPs"/>
    <property type="match status" value="1"/>
</dbReference>
<dbReference type="HAMAP" id="MF_00581">
    <property type="entry name" value="Arg_succ_synth_type2"/>
    <property type="match status" value="1"/>
</dbReference>
<dbReference type="InterPro" id="IPR023437">
    <property type="entry name" value="Arg_succ_synth_type2_subfam"/>
</dbReference>
<dbReference type="InterPro" id="IPR048268">
    <property type="entry name" value="Arginosuc_syn_C"/>
</dbReference>
<dbReference type="InterPro" id="IPR048267">
    <property type="entry name" value="Arginosuc_syn_N"/>
</dbReference>
<dbReference type="InterPro" id="IPR001518">
    <property type="entry name" value="Arginosuc_synth"/>
</dbReference>
<dbReference type="InterPro" id="IPR018223">
    <property type="entry name" value="Arginosuc_synth_CS"/>
</dbReference>
<dbReference type="InterPro" id="IPR023434">
    <property type="entry name" value="Arginosuc_synth_type_1_subfam"/>
</dbReference>
<dbReference type="InterPro" id="IPR024074">
    <property type="entry name" value="AS_cat/multimer_dom_body"/>
</dbReference>
<dbReference type="InterPro" id="IPR024073">
    <property type="entry name" value="AS_multimer_C_tail"/>
</dbReference>
<dbReference type="InterPro" id="IPR014729">
    <property type="entry name" value="Rossmann-like_a/b/a_fold"/>
</dbReference>
<dbReference type="NCBIfam" id="TIGR00032">
    <property type="entry name" value="argG"/>
    <property type="match status" value="1"/>
</dbReference>
<dbReference type="NCBIfam" id="NF003779">
    <property type="entry name" value="PRK05370.1"/>
    <property type="match status" value="1"/>
</dbReference>
<dbReference type="PANTHER" id="PTHR11587">
    <property type="entry name" value="ARGININOSUCCINATE SYNTHASE"/>
    <property type="match status" value="1"/>
</dbReference>
<dbReference type="PANTHER" id="PTHR11587:SF2">
    <property type="entry name" value="ARGININOSUCCINATE SYNTHASE"/>
    <property type="match status" value="1"/>
</dbReference>
<dbReference type="Pfam" id="PF20979">
    <property type="entry name" value="Arginosuc_syn_C"/>
    <property type="match status" value="1"/>
</dbReference>
<dbReference type="Pfam" id="PF00764">
    <property type="entry name" value="Arginosuc_synth"/>
    <property type="match status" value="1"/>
</dbReference>
<dbReference type="SUPFAM" id="SSF52402">
    <property type="entry name" value="Adenine nucleotide alpha hydrolases-like"/>
    <property type="match status" value="1"/>
</dbReference>
<dbReference type="SUPFAM" id="SSF69864">
    <property type="entry name" value="Argininosuccinate synthetase, C-terminal domain"/>
    <property type="match status" value="1"/>
</dbReference>
<dbReference type="PROSITE" id="PS00564">
    <property type="entry name" value="ARGININOSUCCIN_SYN_1"/>
    <property type="match status" value="1"/>
</dbReference>
<dbReference type="PROSITE" id="PS00565">
    <property type="entry name" value="ARGININOSUCCIN_SYN_2"/>
    <property type="match status" value="1"/>
</dbReference>
<protein>
    <recommendedName>
        <fullName evidence="1">Argininosuccinate synthase</fullName>
        <ecNumber evidence="1">6.3.4.5</ecNumber>
    </recommendedName>
    <alternativeName>
        <fullName evidence="1">Citrulline--aspartate ligase</fullName>
    </alternativeName>
</protein>
<proteinExistence type="inferred from homology"/>
<keyword id="KW-0028">Amino-acid biosynthesis</keyword>
<keyword id="KW-0055">Arginine biosynthesis</keyword>
<keyword id="KW-0067">ATP-binding</keyword>
<keyword id="KW-0963">Cytoplasm</keyword>
<keyword id="KW-0436">Ligase</keyword>
<keyword id="KW-0547">Nucleotide-binding</keyword>
<sequence length="445" mass="49347">MTTILPNLPVGQKVGIAFSGGLDTSAALLWMRNKGAIPYAYTANLGQPDEDDYDAIPRRAMEYGAENARLIDCRAQLVAEGIAALQAGAFHVSTAGITYFNTTPIGRAVTGTMLVAAMKEDGVNIWGDGSTYKGNDIERFYRYGLLTNPDLKIYKPWLDQLFIDELGGRAEMSEYMRQAGFDYKMSAEKAYSTDSNMLGATHEAKDLEQLNSGIRIVKPIMGVAFWRDDVAVKAEEVSVRFEEGQPVALNGVEYADPVELMLEANRIGGRHGLGMSDQIENRIIEAKSRGIYEAPGLALLFIAYERLVTGIHNEDTIEQYRESGRKLGRLLYQGRWFDPQAIMLRETAQRWVARAVTGEVTLELRRGNDYSLLNTESPNLTYAPERLSMEKVENAPFTPADRIGQLTMRNLDITDTRDKLFTYVKTGLLASSGGAALPQLKDAKK</sequence>
<reference key="1">
    <citation type="journal article" date="2008" name="BMC Genomics">
        <title>The missing link: Bordetella petrii is endowed with both the metabolic versatility of environmental bacteria and virulence traits of pathogenic Bordetellae.</title>
        <authorList>
            <person name="Gross R."/>
            <person name="Guzman C.A."/>
            <person name="Sebaihia M."/>
            <person name="Martin dos Santos V.A.P."/>
            <person name="Pieper D.H."/>
            <person name="Koebnik R."/>
            <person name="Lechner M."/>
            <person name="Bartels D."/>
            <person name="Buhrmester J."/>
            <person name="Choudhuri J.V."/>
            <person name="Ebensen T."/>
            <person name="Gaigalat L."/>
            <person name="Herrmann S."/>
            <person name="Khachane A.N."/>
            <person name="Larisch C."/>
            <person name="Link S."/>
            <person name="Linke B."/>
            <person name="Meyer F."/>
            <person name="Mormann S."/>
            <person name="Nakunst D."/>
            <person name="Rueckert C."/>
            <person name="Schneiker-Bekel S."/>
            <person name="Schulze K."/>
            <person name="Voerholter F.-J."/>
            <person name="Yevsa T."/>
            <person name="Engle J.T."/>
            <person name="Goldman W.E."/>
            <person name="Puehler A."/>
            <person name="Goebel U.B."/>
            <person name="Goesmann A."/>
            <person name="Bloecker H."/>
            <person name="Kaiser O."/>
            <person name="Martinez-Arias R."/>
        </authorList>
    </citation>
    <scope>NUCLEOTIDE SEQUENCE [LARGE SCALE GENOMIC DNA]</scope>
    <source>
        <strain>ATCC BAA-461 / DSM 12804 / CCUG 43448</strain>
    </source>
</reference>
<feature type="chain" id="PRO_1000129733" description="Argininosuccinate synthase">
    <location>
        <begin position="1"/>
        <end position="445"/>
    </location>
</feature>
<feature type="binding site" evidence="1">
    <location>
        <begin position="17"/>
        <end position="25"/>
    </location>
    <ligand>
        <name>ATP</name>
        <dbReference type="ChEBI" id="CHEBI:30616"/>
    </ligand>
</feature>
<feature type="binding site" evidence="1">
    <location>
        <position position="43"/>
    </location>
    <ligand>
        <name>ATP</name>
        <dbReference type="ChEBI" id="CHEBI:30616"/>
    </ligand>
</feature>
<feature type="binding site" evidence="1">
    <location>
        <position position="99"/>
    </location>
    <ligand>
        <name>L-citrulline</name>
        <dbReference type="ChEBI" id="CHEBI:57743"/>
    </ligand>
</feature>
<feature type="binding site" evidence="1">
    <location>
        <position position="129"/>
    </location>
    <ligand>
        <name>ATP</name>
        <dbReference type="ChEBI" id="CHEBI:30616"/>
    </ligand>
</feature>
<feature type="binding site" evidence="1">
    <location>
        <position position="131"/>
    </location>
    <ligand>
        <name>ATP</name>
        <dbReference type="ChEBI" id="CHEBI:30616"/>
    </ligand>
</feature>
<feature type="binding site" evidence="1">
    <location>
        <position position="131"/>
    </location>
    <ligand>
        <name>L-aspartate</name>
        <dbReference type="ChEBI" id="CHEBI:29991"/>
    </ligand>
</feature>
<feature type="binding site" evidence="1">
    <location>
        <position position="135"/>
    </location>
    <ligand>
        <name>L-aspartate</name>
        <dbReference type="ChEBI" id="CHEBI:29991"/>
    </ligand>
</feature>
<feature type="binding site" evidence="1">
    <location>
        <position position="135"/>
    </location>
    <ligand>
        <name>L-citrulline</name>
        <dbReference type="ChEBI" id="CHEBI:57743"/>
    </ligand>
</feature>
<feature type="binding site" evidence="1">
    <location>
        <position position="136"/>
    </location>
    <ligand>
        <name>ATP</name>
        <dbReference type="ChEBI" id="CHEBI:30616"/>
    </ligand>
</feature>
<feature type="binding site" evidence="1">
    <location>
        <position position="136"/>
    </location>
    <ligand>
        <name>L-aspartate</name>
        <dbReference type="ChEBI" id="CHEBI:29991"/>
    </ligand>
</feature>
<feature type="binding site" evidence="1">
    <location>
        <position position="139"/>
    </location>
    <ligand>
        <name>L-citrulline</name>
        <dbReference type="ChEBI" id="CHEBI:57743"/>
    </ligand>
</feature>
<feature type="binding site" evidence="1">
    <location>
        <position position="192"/>
    </location>
    <ligand>
        <name>L-citrulline</name>
        <dbReference type="ChEBI" id="CHEBI:57743"/>
    </ligand>
</feature>
<feature type="binding site" evidence="1">
    <location>
        <position position="194"/>
    </location>
    <ligand>
        <name>ATP</name>
        <dbReference type="ChEBI" id="CHEBI:30616"/>
    </ligand>
</feature>
<feature type="binding site" evidence="1">
    <location>
        <position position="201"/>
    </location>
    <ligand>
        <name>L-citrulline</name>
        <dbReference type="ChEBI" id="CHEBI:57743"/>
    </ligand>
</feature>
<feature type="binding site" evidence="1">
    <location>
        <position position="203"/>
    </location>
    <ligand>
        <name>L-citrulline</name>
        <dbReference type="ChEBI" id="CHEBI:57743"/>
    </ligand>
</feature>
<feature type="binding site" evidence="1">
    <location>
        <position position="280"/>
    </location>
    <ligand>
        <name>L-citrulline</name>
        <dbReference type="ChEBI" id="CHEBI:57743"/>
    </ligand>
</feature>
<gene>
    <name evidence="1" type="primary">argG</name>
    <name type="ordered locus">Bpet2689</name>
</gene>